<feature type="chain" id="PRO_0000264989" description="Protein FAM117A">
    <location>
        <begin position="1"/>
        <end position="451"/>
    </location>
</feature>
<feature type="region of interest" description="Disordered" evidence="3">
    <location>
        <begin position="1"/>
        <end position="83"/>
    </location>
</feature>
<feature type="region of interest" description="Disordered" evidence="3">
    <location>
        <begin position="164"/>
        <end position="183"/>
    </location>
</feature>
<feature type="region of interest" description="Disordered" evidence="3">
    <location>
        <begin position="242"/>
        <end position="293"/>
    </location>
</feature>
<feature type="region of interest" description="Disordered" evidence="3">
    <location>
        <begin position="403"/>
        <end position="451"/>
    </location>
</feature>
<feature type="coiled-coil region" evidence="2">
    <location>
        <begin position="149"/>
        <end position="175"/>
    </location>
</feature>
<feature type="compositionally biased region" description="Gly residues" evidence="3">
    <location>
        <begin position="1"/>
        <end position="25"/>
    </location>
</feature>
<feature type="compositionally biased region" description="Polar residues" evidence="3">
    <location>
        <begin position="436"/>
        <end position="451"/>
    </location>
</feature>
<feature type="modified residue" description="Phosphoserine" evidence="6">
    <location>
        <position position="29"/>
    </location>
</feature>
<feature type="modified residue" description="Phosphoserine" evidence="1">
    <location>
        <position position="67"/>
    </location>
</feature>
<feature type="modified residue" description="Phosphoserine" evidence="1">
    <location>
        <position position="193"/>
    </location>
</feature>
<feature type="modified residue" description="Phosphoserine" evidence="6">
    <location>
        <position position="213"/>
    </location>
</feature>
<feature type="modified residue" description="Phosphoserine" evidence="6">
    <location>
        <position position="318"/>
    </location>
</feature>
<feature type="modified residue" description="Phosphoserine" evidence="6">
    <location>
        <position position="326"/>
    </location>
</feature>
<feature type="modified residue" description="Phosphothreonine" evidence="1">
    <location>
        <position position="353"/>
    </location>
</feature>
<feature type="modified residue" description="Phosphoserine" evidence="6">
    <location>
        <position position="412"/>
    </location>
</feature>
<feature type="modified residue" description="Phosphoserine" evidence="1">
    <location>
        <position position="426"/>
    </location>
</feature>
<feature type="splice variant" id="VSP_021901" description="In isoform 2." evidence="4">
    <original>GSPLPTASPRAPRKGPEASKASSLPSEPWQRSPPSEESVLFQSSLVV</original>
    <variation>SFPLGL</variation>
    <location>
        <begin position="405"/>
        <end position="451"/>
    </location>
</feature>
<feature type="sequence conflict" description="In Ref. 1; BAC36990." evidence="5" ref="1">
    <original>G</original>
    <variation>C</variation>
    <location>
        <position position="10"/>
    </location>
</feature>
<feature type="sequence conflict" description="In Ref. 1; BAE39505." evidence="5" ref="1">
    <original>GG</original>
    <variation>VC</variation>
    <location>
        <begin position="11"/>
        <end position="12"/>
    </location>
</feature>
<name>F117A_MOUSE</name>
<evidence type="ECO:0000250" key="1">
    <source>
        <dbReference type="UniProtKB" id="Q9C073"/>
    </source>
</evidence>
<evidence type="ECO:0000255" key="2"/>
<evidence type="ECO:0000256" key="3">
    <source>
        <dbReference type="SAM" id="MobiDB-lite"/>
    </source>
</evidence>
<evidence type="ECO:0000303" key="4">
    <source>
    </source>
</evidence>
<evidence type="ECO:0000305" key="5"/>
<evidence type="ECO:0007744" key="6">
    <source>
    </source>
</evidence>
<reference key="1">
    <citation type="journal article" date="2005" name="Science">
        <title>The transcriptional landscape of the mammalian genome.</title>
        <authorList>
            <person name="Carninci P."/>
            <person name="Kasukawa T."/>
            <person name="Katayama S."/>
            <person name="Gough J."/>
            <person name="Frith M.C."/>
            <person name="Maeda N."/>
            <person name="Oyama R."/>
            <person name="Ravasi T."/>
            <person name="Lenhard B."/>
            <person name="Wells C."/>
            <person name="Kodzius R."/>
            <person name="Shimokawa K."/>
            <person name="Bajic V.B."/>
            <person name="Brenner S.E."/>
            <person name="Batalov S."/>
            <person name="Forrest A.R."/>
            <person name="Zavolan M."/>
            <person name="Davis M.J."/>
            <person name="Wilming L.G."/>
            <person name="Aidinis V."/>
            <person name="Allen J.E."/>
            <person name="Ambesi-Impiombato A."/>
            <person name="Apweiler R."/>
            <person name="Aturaliya R.N."/>
            <person name="Bailey T.L."/>
            <person name="Bansal M."/>
            <person name="Baxter L."/>
            <person name="Beisel K.W."/>
            <person name="Bersano T."/>
            <person name="Bono H."/>
            <person name="Chalk A.M."/>
            <person name="Chiu K.P."/>
            <person name="Choudhary V."/>
            <person name="Christoffels A."/>
            <person name="Clutterbuck D.R."/>
            <person name="Crowe M.L."/>
            <person name="Dalla E."/>
            <person name="Dalrymple B.P."/>
            <person name="de Bono B."/>
            <person name="Della Gatta G."/>
            <person name="di Bernardo D."/>
            <person name="Down T."/>
            <person name="Engstrom P."/>
            <person name="Fagiolini M."/>
            <person name="Faulkner G."/>
            <person name="Fletcher C.F."/>
            <person name="Fukushima T."/>
            <person name="Furuno M."/>
            <person name="Futaki S."/>
            <person name="Gariboldi M."/>
            <person name="Georgii-Hemming P."/>
            <person name="Gingeras T.R."/>
            <person name="Gojobori T."/>
            <person name="Green R.E."/>
            <person name="Gustincich S."/>
            <person name="Harbers M."/>
            <person name="Hayashi Y."/>
            <person name="Hensch T.K."/>
            <person name="Hirokawa N."/>
            <person name="Hill D."/>
            <person name="Huminiecki L."/>
            <person name="Iacono M."/>
            <person name="Ikeo K."/>
            <person name="Iwama A."/>
            <person name="Ishikawa T."/>
            <person name="Jakt M."/>
            <person name="Kanapin A."/>
            <person name="Katoh M."/>
            <person name="Kawasawa Y."/>
            <person name="Kelso J."/>
            <person name="Kitamura H."/>
            <person name="Kitano H."/>
            <person name="Kollias G."/>
            <person name="Krishnan S.P."/>
            <person name="Kruger A."/>
            <person name="Kummerfeld S.K."/>
            <person name="Kurochkin I.V."/>
            <person name="Lareau L.F."/>
            <person name="Lazarevic D."/>
            <person name="Lipovich L."/>
            <person name="Liu J."/>
            <person name="Liuni S."/>
            <person name="McWilliam S."/>
            <person name="Madan Babu M."/>
            <person name="Madera M."/>
            <person name="Marchionni L."/>
            <person name="Matsuda H."/>
            <person name="Matsuzawa S."/>
            <person name="Miki H."/>
            <person name="Mignone F."/>
            <person name="Miyake S."/>
            <person name="Morris K."/>
            <person name="Mottagui-Tabar S."/>
            <person name="Mulder N."/>
            <person name="Nakano N."/>
            <person name="Nakauchi H."/>
            <person name="Ng P."/>
            <person name="Nilsson R."/>
            <person name="Nishiguchi S."/>
            <person name="Nishikawa S."/>
            <person name="Nori F."/>
            <person name="Ohara O."/>
            <person name="Okazaki Y."/>
            <person name="Orlando V."/>
            <person name="Pang K.C."/>
            <person name="Pavan W.J."/>
            <person name="Pavesi G."/>
            <person name="Pesole G."/>
            <person name="Petrovsky N."/>
            <person name="Piazza S."/>
            <person name="Reed J."/>
            <person name="Reid J.F."/>
            <person name="Ring B.Z."/>
            <person name="Ringwald M."/>
            <person name="Rost B."/>
            <person name="Ruan Y."/>
            <person name="Salzberg S.L."/>
            <person name="Sandelin A."/>
            <person name="Schneider C."/>
            <person name="Schoenbach C."/>
            <person name="Sekiguchi K."/>
            <person name="Semple C.A."/>
            <person name="Seno S."/>
            <person name="Sessa L."/>
            <person name="Sheng Y."/>
            <person name="Shibata Y."/>
            <person name="Shimada H."/>
            <person name="Shimada K."/>
            <person name="Silva D."/>
            <person name="Sinclair B."/>
            <person name="Sperling S."/>
            <person name="Stupka E."/>
            <person name="Sugiura K."/>
            <person name="Sultana R."/>
            <person name="Takenaka Y."/>
            <person name="Taki K."/>
            <person name="Tammoja K."/>
            <person name="Tan S.L."/>
            <person name="Tang S."/>
            <person name="Taylor M.S."/>
            <person name="Tegner J."/>
            <person name="Teichmann S.A."/>
            <person name="Ueda H.R."/>
            <person name="van Nimwegen E."/>
            <person name="Verardo R."/>
            <person name="Wei C.L."/>
            <person name="Yagi K."/>
            <person name="Yamanishi H."/>
            <person name="Zabarovsky E."/>
            <person name="Zhu S."/>
            <person name="Zimmer A."/>
            <person name="Hide W."/>
            <person name="Bult C."/>
            <person name="Grimmond S.M."/>
            <person name="Teasdale R.D."/>
            <person name="Liu E.T."/>
            <person name="Brusic V."/>
            <person name="Quackenbush J."/>
            <person name="Wahlestedt C."/>
            <person name="Mattick J.S."/>
            <person name="Hume D.A."/>
            <person name="Kai C."/>
            <person name="Sasaki D."/>
            <person name="Tomaru Y."/>
            <person name="Fukuda S."/>
            <person name="Kanamori-Katayama M."/>
            <person name="Suzuki M."/>
            <person name="Aoki J."/>
            <person name="Arakawa T."/>
            <person name="Iida J."/>
            <person name="Imamura K."/>
            <person name="Itoh M."/>
            <person name="Kato T."/>
            <person name="Kawaji H."/>
            <person name="Kawagashira N."/>
            <person name="Kawashima T."/>
            <person name="Kojima M."/>
            <person name="Kondo S."/>
            <person name="Konno H."/>
            <person name="Nakano K."/>
            <person name="Ninomiya N."/>
            <person name="Nishio T."/>
            <person name="Okada M."/>
            <person name="Plessy C."/>
            <person name="Shibata K."/>
            <person name="Shiraki T."/>
            <person name="Suzuki S."/>
            <person name="Tagami M."/>
            <person name="Waki K."/>
            <person name="Watahiki A."/>
            <person name="Okamura-Oho Y."/>
            <person name="Suzuki H."/>
            <person name="Kawai J."/>
            <person name="Hayashizaki Y."/>
        </authorList>
    </citation>
    <scope>NUCLEOTIDE SEQUENCE [LARGE SCALE MRNA] (ISOFORMS 1 AND 2)</scope>
    <source>
        <strain>C57BL/6J</strain>
        <tissue>Embryo</tissue>
        <tissue>Liver</tissue>
        <tissue>Spleen</tissue>
    </source>
</reference>
<reference key="2">
    <citation type="journal article" date="2009" name="PLoS Biol.">
        <title>Lineage-specific biology revealed by a finished genome assembly of the mouse.</title>
        <authorList>
            <person name="Church D.M."/>
            <person name="Goodstadt L."/>
            <person name="Hillier L.W."/>
            <person name="Zody M.C."/>
            <person name="Goldstein S."/>
            <person name="She X."/>
            <person name="Bult C.J."/>
            <person name="Agarwala R."/>
            <person name="Cherry J.L."/>
            <person name="DiCuccio M."/>
            <person name="Hlavina W."/>
            <person name="Kapustin Y."/>
            <person name="Meric P."/>
            <person name="Maglott D."/>
            <person name="Birtle Z."/>
            <person name="Marques A.C."/>
            <person name="Graves T."/>
            <person name="Zhou S."/>
            <person name="Teague B."/>
            <person name="Potamousis K."/>
            <person name="Churas C."/>
            <person name="Place M."/>
            <person name="Herschleb J."/>
            <person name="Runnheim R."/>
            <person name="Forrest D."/>
            <person name="Amos-Landgraf J."/>
            <person name="Schwartz D.C."/>
            <person name="Cheng Z."/>
            <person name="Lindblad-Toh K."/>
            <person name="Eichler E.E."/>
            <person name="Ponting C.P."/>
        </authorList>
    </citation>
    <scope>NUCLEOTIDE SEQUENCE [LARGE SCALE GENOMIC DNA]</scope>
    <source>
        <strain>C57BL/6J</strain>
    </source>
</reference>
<reference key="3">
    <citation type="journal article" date="2004" name="Genome Res.">
        <title>The status, quality, and expansion of the NIH full-length cDNA project: the Mammalian Gene Collection (MGC).</title>
        <authorList>
            <consortium name="The MGC Project Team"/>
        </authorList>
    </citation>
    <scope>NUCLEOTIDE SEQUENCE [LARGE SCALE MRNA] (ISOFORM 1)</scope>
    <source>
        <strain>C57BL/6J</strain>
        <tissue>Brain</tissue>
    </source>
</reference>
<reference key="4">
    <citation type="journal article" date="2010" name="Cell">
        <title>A tissue-specific atlas of mouse protein phosphorylation and expression.</title>
        <authorList>
            <person name="Huttlin E.L."/>
            <person name="Jedrychowski M.P."/>
            <person name="Elias J.E."/>
            <person name="Goswami T."/>
            <person name="Rad R."/>
            <person name="Beausoleil S.A."/>
            <person name="Villen J."/>
            <person name="Haas W."/>
            <person name="Sowa M.E."/>
            <person name="Gygi S.P."/>
        </authorList>
    </citation>
    <scope>PHOSPHORYLATION [LARGE SCALE ANALYSIS] AT SER-29; SER-213; SER-318; SER-326 AND SER-412</scope>
    <scope>IDENTIFICATION BY MASS SPECTROMETRY [LARGE SCALE ANALYSIS]</scope>
    <source>
        <tissue>Kidney</tissue>
        <tissue>Lung</tissue>
        <tissue>Pancreas</tissue>
        <tissue>Spleen</tissue>
        <tissue>Testis</tissue>
    </source>
</reference>
<organism>
    <name type="scientific">Mus musculus</name>
    <name type="common">Mouse</name>
    <dbReference type="NCBI Taxonomy" id="10090"/>
    <lineage>
        <taxon>Eukaryota</taxon>
        <taxon>Metazoa</taxon>
        <taxon>Chordata</taxon>
        <taxon>Craniata</taxon>
        <taxon>Vertebrata</taxon>
        <taxon>Euteleostomi</taxon>
        <taxon>Mammalia</taxon>
        <taxon>Eutheria</taxon>
        <taxon>Euarchontoglires</taxon>
        <taxon>Glires</taxon>
        <taxon>Rodentia</taxon>
        <taxon>Myomorpha</taxon>
        <taxon>Muroidea</taxon>
        <taxon>Muridae</taxon>
        <taxon>Murinae</taxon>
        <taxon>Mus</taxon>
        <taxon>Mus</taxon>
    </lineage>
</organism>
<proteinExistence type="evidence at protein level"/>
<accession>Q7TNF9</accession>
<accession>Q3TJJ0</accession>
<accession>Q3TND5</accession>
<accession>Q8BJY9</accession>
<keyword id="KW-0025">Alternative splicing</keyword>
<keyword id="KW-0175">Coiled coil</keyword>
<keyword id="KW-0597">Phosphoprotein</keyword>
<keyword id="KW-1185">Reference proteome</keyword>
<gene>
    <name type="primary">Fam117a</name>
</gene>
<comment type="alternative products">
    <event type="alternative splicing"/>
    <isoform>
        <id>Q7TNF9-1</id>
        <name>1</name>
        <sequence type="displayed"/>
    </isoform>
    <isoform>
        <id>Q7TNF9-2</id>
        <name>2</name>
        <sequence type="described" ref="VSP_021901"/>
    </isoform>
</comment>
<comment type="similarity">
    <text evidence="5">Belongs to the FAM117 family.</text>
</comment>
<sequence>MSGAAAGGRGGGSWGPGRGGAGGLRRGCSPPAPAGSPRVGLQPLRATVPFQLQQPHQRRDGGGRAASVPCSVAPEKSVCRPQPPQVRRTFSLDTILSSYLLGQWPRDADGAFTCCTNDKATQTPLSWQEPEGERASFCMHKRSASWGSTDHRKEITKLKQQLQRTKLSRSGKEKERSCPVQGDHAALGAGRASLPSHPPGPPVLRLSPCLHRSLEGLNQELEEVFVKEQGEEELLRILEVPDGHRAPAPPQNSSCDHSLLLEPGNLTSSPSVPLASPQPPSQASREEHQGATEELASIHGNKASSPGNPAFLEDGSPSPVLAFAASPRPNHSYVFKREPPEGCERVRVFEEATSPGPDLAFLTSCPDKNKVHFNPTGSAFCPVSLIKPLFPSMGFIFRNCPSSPGSPLPTASPRAPRKGPEASKASSLPSEPWQRSPPSEESVLFQSSLVV</sequence>
<protein>
    <recommendedName>
        <fullName>Protein FAM117A</fullName>
    </recommendedName>
</protein>
<dbReference type="EMBL" id="AK077747">
    <property type="protein sequence ID" value="BAC36990.1"/>
    <property type="molecule type" value="mRNA"/>
</dbReference>
<dbReference type="EMBL" id="AK165378">
    <property type="protein sequence ID" value="BAE38154.1"/>
    <property type="molecule type" value="mRNA"/>
</dbReference>
<dbReference type="EMBL" id="AK167417">
    <property type="protein sequence ID" value="BAE39505.1"/>
    <property type="molecule type" value="mRNA"/>
</dbReference>
<dbReference type="EMBL" id="AL627222">
    <property type="status" value="NOT_ANNOTATED_CDS"/>
    <property type="molecule type" value="Genomic_DNA"/>
</dbReference>
<dbReference type="EMBL" id="AL662875">
    <property type="status" value="NOT_ANNOTATED_CDS"/>
    <property type="molecule type" value="Genomic_DNA"/>
</dbReference>
<dbReference type="EMBL" id="BC055690">
    <property type="protein sequence ID" value="AAH55690.1"/>
    <property type="molecule type" value="mRNA"/>
</dbReference>
<dbReference type="CCDS" id="CCDS25276.1">
    <molecule id="Q7TNF9-1"/>
</dbReference>
<dbReference type="RefSeq" id="NP_766131.2">
    <molecule id="Q7TNF9-1"/>
    <property type="nucleotide sequence ID" value="NM_172543.4"/>
</dbReference>
<dbReference type="FunCoup" id="Q7TNF9">
    <property type="interactions" value="933"/>
</dbReference>
<dbReference type="STRING" id="10090.ENSMUSP00000049162"/>
<dbReference type="iPTMnet" id="Q7TNF9"/>
<dbReference type="PhosphoSitePlus" id="Q7TNF9"/>
<dbReference type="jPOST" id="Q7TNF9"/>
<dbReference type="PaxDb" id="10090-ENSMUSP00000049162"/>
<dbReference type="PeptideAtlas" id="Q7TNF9"/>
<dbReference type="ProteomicsDB" id="275958">
    <molecule id="Q7TNF9-1"/>
</dbReference>
<dbReference type="ProteomicsDB" id="275959">
    <molecule id="Q7TNF9-2"/>
</dbReference>
<dbReference type="Antibodypedia" id="17977">
    <property type="antibodies" value="49 antibodies from 16 providers"/>
</dbReference>
<dbReference type="DNASU" id="215512"/>
<dbReference type="Ensembl" id="ENSMUST00000037502.7">
    <molecule id="Q7TNF9-1"/>
    <property type="protein sequence ID" value="ENSMUSP00000049162.7"/>
    <property type="gene ID" value="ENSMUSG00000038893.13"/>
</dbReference>
<dbReference type="GeneID" id="215512"/>
<dbReference type="KEGG" id="mmu:215512"/>
<dbReference type="UCSC" id="uc007lag.2">
    <molecule id="Q7TNF9-1"/>
    <property type="organism name" value="mouse"/>
</dbReference>
<dbReference type="AGR" id="MGI:2144564"/>
<dbReference type="CTD" id="81558"/>
<dbReference type="MGI" id="MGI:2144564">
    <property type="gene designation" value="Fam117a"/>
</dbReference>
<dbReference type="VEuPathDB" id="HostDB:ENSMUSG00000038893"/>
<dbReference type="eggNOG" id="ENOG502QW8D">
    <property type="taxonomic scope" value="Eukaryota"/>
</dbReference>
<dbReference type="GeneTree" id="ENSGT00950000183046"/>
<dbReference type="HOGENOM" id="CLU_033432_3_2_1"/>
<dbReference type="InParanoid" id="Q7TNF9"/>
<dbReference type="OMA" id="QWPRDTD"/>
<dbReference type="OrthoDB" id="10037581at2759"/>
<dbReference type="PhylomeDB" id="Q7TNF9"/>
<dbReference type="TreeFam" id="TF333159"/>
<dbReference type="BioGRID-ORCS" id="215512">
    <property type="hits" value="3 hits in 78 CRISPR screens"/>
</dbReference>
<dbReference type="ChiTaRS" id="Fam117a">
    <property type="organism name" value="mouse"/>
</dbReference>
<dbReference type="PRO" id="PR:Q7TNF9"/>
<dbReference type="Proteomes" id="UP000000589">
    <property type="component" value="Chromosome 11"/>
</dbReference>
<dbReference type="RNAct" id="Q7TNF9">
    <property type="molecule type" value="protein"/>
</dbReference>
<dbReference type="Bgee" id="ENSMUSG00000038893">
    <property type="expression patterns" value="Expressed in femorotibial joint and 241 other cell types or tissues"/>
</dbReference>
<dbReference type="InterPro" id="IPR026642">
    <property type="entry name" value="Glcci1/FAM117"/>
</dbReference>
<dbReference type="PANTHER" id="PTHR14972">
    <property type="entry name" value="AGAP011572-PA"/>
    <property type="match status" value="1"/>
</dbReference>
<dbReference type="PANTHER" id="PTHR14972:SF7">
    <property type="entry name" value="PROTEIN FAM117A"/>
    <property type="match status" value="1"/>
</dbReference>
<dbReference type="Pfam" id="PF15388">
    <property type="entry name" value="FAM117"/>
    <property type="match status" value="1"/>
</dbReference>